<organism>
    <name type="scientific">Saccharomyces cerevisiae (strain ATCC 204508 / S288c)</name>
    <name type="common">Baker's yeast</name>
    <dbReference type="NCBI Taxonomy" id="559292"/>
    <lineage>
        <taxon>Eukaryota</taxon>
        <taxon>Fungi</taxon>
        <taxon>Dikarya</taxon>
        <taxon>Ascomycota</taxon>
        <taxon>Saccharomycotina</taxon>
        <taxon>Saccharomycetes</taxon>
        <taxon>Saccharomycetales</taxon>
        <taxon>Saccharomycetaceae</taxon>
        <taxon>Saccharomyces</taxon>
    </lineage>
</organism>
<keyword id="KW-0963">Cytoplasm</keyword>
<keyword id="KW-0319">Glycerol metabolism</keyword>
<keyword id="KW-0521">NADP</keyword>
<keyword id="KW-0560">Oxidoreductase</keyword>
<keyword id="KW-0597">Phosphoprotein</keyword>
<keyword id="KW-1185">Reference proteome</keyword>
<feature type="chain" id="PRO_0000124611" description="Glycerol 2-dehydrogenase (NADP(+))">
    <location>
        <begin position="1"/>
        <end position="312"/>
    </location>
</feature>
<feature type="active site" description="Proton donor" evidence="1">
    <location>
        <position position="56"/>
    </location>
</feature>
<feature type="binding site" evidence="1">
    <location>
        <position position="112"/>
    </location>
    <ligand>
        <name>substrate</name>
    </ligand>
</feature>
<feature type="binding site" evidence="1">
    <location>
        <begin position="220"/>
        <end position="274"/>
    </location>
    <ligand>
        <name>NADP(+)</name>
        <dbReference type="ChEBI" id="CHEBI:58349"/>
    </ligand>
</feature>
<feature type="site" description="Lowers pKa of active site Tyr" evidence="1">
    <location>
        <position position="81"/>
    </location>
</feature>
<feature type="modified residue" description="Phosphoserine" evidence="16">
    <location>
        <position position="306"/>
    </location>
</feature>
<feature type="mutagenesis site" description="Decreases catalytic activity." evidence="11">
    <original>Q</original>
    <variation>K</variation>
    <location>
        <position position="29"/>
    </location>
</feature>
<feature type="mutagenesis site" description="Loss of catalytic activity." evidence="7">
    <original>Y</original>
    <variation>L</variation>
    <location>
        <position position="56"/>
    </location>
</feature>
<feature type="mutagenesis site" description="Decreases catalytic activity." evidence="11">
    <original>K</original>
    <variation>R</variation>
    <location>
        <position position="264"/>
    </location>
</feature>
<feature type="mutagenesis site" description="Decreases catalytic activity." evidence="11">
    <original>N</original>
    <variation>Q</variation>
    <location>
        <position position="267"/>
    </location>
</feature>
<feature type="mutagenesis site" description="Decreases catalytic activity." evidence="11">
    <original>R</original>
    <variation>H</variation>
    <variation>Y</variation>
    <variation>K</variation>
    <location>
        <position position="270"/>
    </location>
</feature>
<comment type="function">
    <text evidence="3 6 7 10 11 12">Glycerol dehydrogenase involved in glycerol catabolism under microaerobic conditions. Has mRNA binding activity.</text>
</comment>
<comment type="catalytic activity">
    <reaction evidence="2 4 7 11">
        <text>glycerol + NADP(+) = dihydroxyacetone + NADPH + H(+)</text>
        <dbReference type="Rhea" id="RHEA:12753"/>
        <dbReference type="ChEBI" id="CHEBI:15378"/>
        <dbReference type="ChEBI" id="CHEBI:16016"/>
        <dbReference type="ChEBI" id="CHEBI:17754"/>
        <dbReference type="ChEBI" id="CHEBI:57783"/>
        <dbReference type="ChEBI" id="CHEBI:58349"/>
        <dbReference type="EC" id="1.1.1.156"/>
    </reaction>
</comment>
<comment type="biophysicochemical properties">
    <kinetics>
        <KM evidence="2 4 7 11">11.3 mM for D,L-glyceraldehyde</KM>
        <KM evidence="2 4 7 11">0.007 mM for NADPH</KM>
        <KM evidence="2 4 7 11">0.13 mM for p-nitrobenzaldehyde</KM>
        <KM evidence="2 4 7 11">5.2 mM for benzaldehyde</KM>
        <KM evidence="2 4 7 11">8.7 mM for phenylglyoxal</KM>
        <KM evidence="2 4 7 11">50 mM for acrolein</KM>
        <KM evidence="2 4 7 11">54 mM for butyraldehyde</KM>
        <KM evidence="2 4 7 11">0.724 mM for ethyl-4-chloro-3-oxo-butanoate</KM>
    </kinetics>
    <phDependence>
        <text evidence="2 4 7 11">Optimum pH is 6.5.</text>
    </phDependence>
</comment>
<comment type="subcellular location">
    <subcellularLocation>
        <location>Cytoplasm</location>
    </subcellularLocation>
</comment>
<comment type="induction">
    <text evidence="5 8 9 13 14">Expression is under the control of GAL4 and REB1, and is both positively controlled by galactose and negatively by glucose. Also induced by salt stress and in response to DNA replication stress.</text>
</comment>
<comment type="similarity">
    <text evidence="15">Belongs to the aldo/keto reductase family.</text>
</comment>
<evidence type="ECO:0000250" key="1"/>
<evidence type="ECO:0000269" key="2">
    <source>
    </source>
</evidence>
<evidence type="ECO:0000269" key="3">
    <source>
    </source>
</evidence>
<evidence type="ECO:0000269" key="4">
    <source>
    </source>
</evidence>
<evidence type="ECO:0000269" key="5">
    <source>
    </source>
</evidence>
<evidence type="ECO:0000269" key="6">
    <source>
    </source>
</evidence>
<evidence type="ECO:0000269" key="7">
    <source>
    </source>
</evidence>
<evidence type="ECO:0000269" key="8">
    <source>
    </source>
</evidence>
<evidence type="ECO:0000269" key="9">
    <source>
    </source>
</evidence>
<evidence type="ECO:0000269" key="10">
    <source>
    </source>
</evidence>
<evidence type="ECO:0000269" key="11">
    <source>
    </source>
</evidence>
<evidence type="ECO:0000269" key="12">
    <source>
    </source>
</evidence>
<evidence type="ECO:0000269" key="13">
    <source>
    </source>
</evidence>
<evidence type="ECO:0000269" key="14">
    <source>
    </source>
</evidence>
<evidence type="ECO:0000305" key="15"/>
<evidence type="ECO:0007744" key="16">
    <source>
    </source>
</evidence>
<reference key="1">
    <citation type="journal article" date="1988" name="FEBS Lett.">
        <title>A nuclear yeast gene (GCY) encodes a polypeptide with high homology to a vertebrate eye lens protein.</title>
        <authorList>
            <person name="Oechsner U."/>
            <person name="Magdolen V."/>
            <person name="Bandlow W."/>
        </authorList>
    </citation>
    <scope>NUCLEOTIDE SEQUENCE [GENOMIC DNA]</scope>
    <source>
        <strain>ATCC 24657 / D273-10B</strain>
    </source>
</reference>
<reference key="2">
    <citation type="journal article" date="1997" name="J. Biol. Chem.">
        <title>The type of basal promoter determines the regulated or constitutive mode of transcription in the common control region of the yeast gene pair GCY1/RIO1.</title>
        <authorList>
            <person name="Angermayr M."/>
            <person name="Bandlow W."/>
        </authorList>
    </citation>
    <scope>NUCLEOTIDE SEQUENCE [GENOMIC DNA]</scope>
    <source>
        <strain>ATCC 25657</strain>
    </source>
</reference>
<reference key="3">
    <citation type="journal article" date="1996" name="Yeast">
        <title>Sequencing and analysis of 51 kb on the right arm of chromosome XV from Saccharomyces cerevisiae reveals 30 open reading frames.</title>
        <authorList>
            <person name="Wiemann S."/>
            <person name="Rechmann S."/>
            <person name="Benes V."/>
            <person name="Voss H."/>
            <person name="Schwager C."/>
            <person name="Vlcek C."/>
            <person name="Stegemann J."/>
            <person name="Zimmermann J."/>
            <person name="Erfle H."/>
            <person name="Paces V."/>
            <person name="Ansorge W."/>
        </authorList>
    </citation>
    <scope>NUCLEOTIDE SEQUENCE [GENOMIC DNA]</scope>
    <source>
        <strain>ATCC 96604 / S288c / FY1679</strain>
    </source>
</reference>
<reference key="4">
    <citation type="journal article" date="1997" name="Yeast">
        <title>DNA sequencing and analysis of 130 kb from yeast chromosome XV.</title>
        <authorList>
            <person name="Voss H."/>
            <person name="Benes V."/>
            <person name="Andrade M.A."/>
            <person name="Valencia A."/>
            <person name="Rechmann S."/>
            <person name="Teodoru C."/>
            <person name="Schwager C."/>
            <person name="Paces V."/>
            <person name="Sander C."/>
            <person name="Ansorge W."/>
        </authorList>
    </citation>
    <scope>NUCLEOTIDE SEQUENCE [GENOMIC DNA]</scope>
</reference>
<reference key="5">
    <citation type="journal article" date="1997" name="Nature">
        <title>The nucleotide sequence of Saccharomyces cerevisiae chromosome XV.</title>
        <authorList>
            <person name="Dujon B."/>
            <person name="Albermann K."/>
            <person name="Aldea M."/>
            <person name="Alexandraki D."/>
            <person name="Ansorge W."/>
            <person name="Arino J."/>
            <person name="Benes V."/>
            <person name="Bohn C."/>
            <person name="Bolotin-Fukuhara M."/>
            <person name="Bordonne R."/>
            <person name="Boyer J."/>
            <person name="Camasses A."/>
            <person name="Casamayor A."/>
            <person name="Casas C."/>
            <person name="Cheret G."/>
            <person name="Cziepluch C."/>
            <person name="Daignan-Fornier B."/>
            <person name="Dang V.-D."/>
            <person name="de Haan M."/>
            <person name="Delius H."/>
            <person name="Durand P."/>
            <person name="Fairhead C."/>
            <person name="Feldmann H."/>
            <person name="Gaillon L."/>
            <person name="Galisson F."/>
            <person name="Gamo F.-J."/>
            <person name="Gancedo C."/>
            <person name="Goffeau A."/>
            <person name="Goulding S.E."/>
            <person name="Grivell L.A."/>
            <person name="Habbig B."/>
            <person name="Hand N.J."/>
            <person name="Hani J."/>
            <person name="Hattenhorst U."/>
            <person name="Hebling U."/>
            <person name="Hernando Y."/>
            <person name="Herrero E."/>
            <person name="Heumann K."/>
            <person name="Hiesel R."/>
            <person name="Hilger F."/>
            <person name="Hofmann B."/>
            <person name="Hollenberg C.P."/>
            <person name="Hughes B."/>
            <person name="Jauniaux J.-C."/>
            <person name="Kalogeropoulos A."/>
            <person name="Katsoulou C."/>
            <person name="Kordes E."/>
            <person name="Lafuente M.J."/>
            <person name="Landt O."/>
            <person name="Louis E.J."/>
            <person name="Maarse A.C."/>
            <person name="Madania A."/>
            <person name="Mannhaupt G."/>
            <person name="Marck C."/>
            <person name="Martin R.P."/>
            <person name="Mewes H.-W."/>
            <person name="Michaux G."/>
            <person name="Paces V."/>
            <person name="Parle-McDermott A.G."/>
            <person name="Pearson B.M."/>
            <person name="Perrin A."/>
            <person name="Pettersson B."/>
            <person name="Poch O."/>
            <person name="Pohl T.M."/>
            <person name="Poirey R."/>
            <person name="Portetelle D."/>
            <person name="Pujol A."/>
            <person name="Purnelle B."/>
            <person name="Ramezani Rad M."/>
            <person name="Rechmann S."/>
            <person name="Schwager C."/>
            <person name="Schweizer M."/>
            <person name="Sor F."/>
            <person name="Sterky F."/>
            <person name="Tarassov I.A."/>
            <person name="Teodoru C."/>
            <person name="Tettelin H."/>
            <person name="Thierry A."/>
            <person name="Tobiasch E."/>
            <person name="Tzermia M."/>
            <person name="Uhlen M."/>
            <person name="Unseld M."/>
            <person name="Valens M."/>
            <person name="Vandenbol M."/>
            <person name="Vetter I."/>
            <person name="Vlcek C."/>
            <person name="Voet M."/>
            <person name="Volckaert G."/>
            <person name="Voss H."/>
            <person name="Wambutt R."/>
            <person name="Wedler H."/>
            <person name="Wiemann S."/>
            <person name="Winsor B."/>
            <person name="Wolfe K.H."/>
            <person name="Zollner A."/>
            <person name="Zumstein E."/>
            <person name="Kleine K."/>
        </authorList>
    </citation>
    <scope>NUCLEOTIDE SEQUENCE [LARGE SCALE GENOMIC DNA]</scope>
    <source>
        <strain>ATCC 204508 / S288c</strain>
    </source>
</reference>
<reference key="6">
    <citation type="journal article" date="2014" name="G3 (Bethesda)">
        <title>The reference genome sequence of Saccharomyces cerevisiae: Then and now.</title>
        <authorList>
            <person name="Engel S.R."/>
            <person name="Dietrich F.S."/>
            <person name="Fisk D.G."/>
            <person name="Binkley G."/>
            <person name="Balakrishnan R."/>
            <person name="Costanzo M.C."/>
            <person name="Dwight S.S."/>
            <person name="Hitz B.C."/>
            <person name="Karra K."/>
            <person name="Nash R.S."/>
            <person name="Weng S."/>
            <person name="Wong E.D."/>
            <person name="Lloyd P."/>
            <person name="Skrzypek M.S."/>
            <person name="Miyasato S.R."/>
            <person name="Simison M."/>
            <person name="Cherry J.M."/>
        </authorList>
    </citation>
    <scope>GENOME REANNOTATION</scope>
    <source>
        <strain>ATCC 204508 / S288c</strain>
    </source>
</reference>
<reference key="7">
    <citation type="journal article" date="1990" name="Gene">
        <title>Transcriptional control by galactose of a yeast gene encoding a protein homologous to mammalian aldo/keto reductases.</title>
        <authorList>
            <person name="Magdolen V."/>
            <person name="Oechsner U."/>
            <person name="Trommler P."/>
            <person name="Bandlow W."/>
        </authorList>
    </citation>
    <scope>INDUCTION</scope>
</reference>
<reference key="8">
    <citation type="journal article" date="1997" name="J. Biol. Chem.">
        <title>Metabolic and regulatory changes associated with growth of Saccharomyces cerevisiae in 1.4 M NaCl. Evidence for osmotic induction of glycerol dissimilation via the dihydroxyacetone pathway.</title>
        <authorList>
            <person name="Norbeck J."/>
            <person name="Blomberg A."/>
        </authorList>
    </citation>
    <scope>INDUCTION</scope>
</reference>
<reference key="9">
    <citation type="journal article" date="1997" name="Mol. Gen. Genet.">
        <title>The general regulatory factor Reb1p controls basal, but not Gal4p-mediated, transcription of the GCY1 gene in yeast.</title>
        <authorList>
            <person name="Angermayr M."/>
            <person name="Bandlow W."/>
        </authorList>
    </citation>
    <scope>INDUCTION</scope>
</reference>
<reference key="10">
    <citation type="journal article" date="2000" name="Acta Crystallogr. D">
        <title>Crystallization and aldo-keto reductase activity of Gcy1p from Saccharomyces cerevisiae.</title>
        <authorList>
            <person name="Hur E."/>
            <person name="Wilson D.K."/>
        </authorList>
    </citation>
    <scope>CRYSTALLIZATION</scope>
    <scope>CATALYTIC ACTIVITY</scope>
    <scope>BIOPHYSICOCHEMICAL PROPERTIES</scope>
</reference>
<reference key="11">
    <citation type="journal article" date="2000" name="Yeast">
        <title>Microaerobic glycerol formation in Saccharomyces cerevisiae.</title>
        <authorList>
            <person name="Costenoble R."/>
            <person name="Valadi H."/>
            <person name="Gustafsson L."/>
            <person name="Niklasson C."/>
            <person name="Franzen C.J."/>
        </authorList>
    </citation>
    <scope>FUNCTION</scope>
</reference>
<reference key="12">
    <citation type="journal article" date="2001" name="Chem. Biol. Interact.">
        <title>Functional genomic studies of aldo-keto reductases.</title>
        <authorList>
            <person name="Petrash J.M."/>
            <person name="Murthy B.S."/>
            <person name="Young M."/>
            <person name="Morris K."/>
            <person name="Rikimaru L."/>
            <person name="Griest T.A."/>
            <person name="Harter T."/>
        </authorList>
    </citation>
    <scope>IDENTIFICATION</scope>
    <scope>CATALYTIC ACTIVITY</scope>
    <scope>BIOPHYSICOCHEMICAL PROPERTIES</scope>
</reference>
<reference key="13">
    <citation type="journal article" date="2003" name="J. Biol. Chem.">
        <title>Permanent nucleosome exclusion from the Gal4p-inducible yeast GCY1 promoter.</title>
        <authorList>
            <person name="Angermayr M."/>
            <person name="Bandlow W."/>
        </authorList>
    </citation>
    <scope>INDUCTION</scope>
</reference>
<reference key="14">
    <citation type="journal article" date="2004" name="Appl. Microbiol. Biotechnol.">
        <title>Intracellular glycerol influences resistance to freeze stress in Saccharomyces cerevisiae: analysis of a quadruple mutant in glycerol dehydrogenase genes and glycerol-enriched cells.</title>
        <authorList>
            <person name="Izawa S."/>
            <person name="Sato M."/>
            <person name="Yokoigawa K."/>
            <person name="Inoue Y."/>
        </authorList>
    </citation>
    <scope>FUNCTION</scope>
</reference>
<reference key="15">
    <citation type="journal article" date="2007" name="Biochim. Biophys. Acta">
        <title>Functional studies of aldo-keto reductases in Saccharomyces cerevisiae.</title>
        <authorList>
            <person name="Chang Q."/>
            <person name="Griest T.A."/>
            <person name="Harter T.M."/>
            <person name="Petrash J.M."/>
        </authorList>
    </citation>
    <scope>FUNCTION</scope>
    <scope>CATALYTIC ACTIVITY</scope>
    <scope>BIOPHYSICOCHEMICAL PROPERTIES</scope>
    <scope>MUTAGENESIS OF TYR-56</scope>
</reference>
<reference key="16">
    <citation type="journal article" date="2009" name="Science">
        <title>Global analysis of Cdk1 substrate phosphorylation sites provides insights into evolution.</title>
        <authorList>
            <person name="Holt L.J."/>
            <person name="Tuch B.B."/>
            <person name="Villen J."/>
            <person name="Johnson A.D."/>
            <person name="Gygi S.P."/>
            <person name="Morgan D.O."/>
        </authorList>
    </citation>
    <scope>PHOSPHORYLATION [LARGE SCALE ANALYSIS] AT SER-306</scope>
    <scope>IDENTIFICATION BY MASS SPECTROMETRY [LARGE SCALE ANALYSIS]</scope>
</reference>
<reference key="17">
    <citation type="journal article" date="2010" name="PLoS ONE">
        <title>Proteome-wide search reveals unexpected RNA-binding proteins in Saccharomyces cerevisiae.</title>
        <authorList>
            <person name="Tsvetanova N.G."/>
            <person name="Klass D.M."/>
            <person name="Salzman J."/>
            <person name="Brown P.O."/>
        </authorList>
    </citation>
    <scope>RNA-BINDING</scope>
</reference>
<reference key="18">
    <citation type="journal article" date="2012" name="J. Appl. Microbiol.">
        <title>Characterization of GCY1 in Saccharomyces cerevisiae by metabolic profiling.</title>
        <authorList>
            <person name="Jung J.Y."/>
            <person name="Kim T.Y."/>
            <person name="Ng C.Y."/>
            <person name="Oh M.K."/>
        </authorList>
    </citation>
    <scope>FUNCTION</scope>
</reference>
<reference key="19">
    <citation type="journal article" date="2012" name="Nat. Cell Biol.">
        <title>Dissecting DNA damage response pathways by analysing protein localization and abundance changes during DNA replication stress.</title>
        <authorList>
            <person name="Tkach J.M."/>
            <person name="Yimit A."/>
            <person name="Lee A.Y."/>
            <person name="Riffle M."/>
            <person name="Costanzo M."/>
            <person name="Jaschob D."/>
            <person name="Hendry J.A."/>
            <person name="Ou J."/>
            <person name="Moffat J."/>
            <person name="Boone C."/>
            <person name="Davis T.N."/>
            <person name="Nislow C."/>
            <person name="Brown G.W."/>
        </authorList>
    </citation>
    <scope>INDUCTION</scope>
</reference>
<reference key="20">
    <citation type="journal article" date="2013" name="J. Ind. Microbiol. Biotechnol.">
        <title>Engineering of the glycerol decomposition pathway and cofactor regulation in an industrial yeast improves ethanol production.</title>
        <authorList>
            <person name="Zhang L."/>
            <person name="Tang Y."/>
            <person name="Guo Z."/>
            <person name="Shi G."/>
        </authorList>
    </citation>
    <scope>FUNCTION</scope>
</reference>
<reference key="21">
    <citation type="journal article" date="2013" name="J. Microbiol. Biotechnol.">
        <title>Development of a bioconversion system using Saccharomyces cerevisiae reductase YOR120W and Bacillus subtilis glucose dehydrogenase for chiral alcohol synthesis.</title>
        <authorList>
            <person name="Yoon S.A."/>
            <person name="Kim H.K."/>
        </authorList>
    </citation>
    <scope>FUNCTION</scope>
    <scope>CATALYTIC ACTIVITY</scope>
    <scope>BIOPHYSICOCHEMICAL PROPERTIES</scope>
    <scope>MUTAGENESIS OF GLN-29; LYS-264; ASN-267 AND ARG-270</scope>
</reference>
<gene>
    <name type="primary">GCY1</name>
    <name type="synonym">GCY</name>
    <name type="ordered locus">YOR120W</name>
    <name type="ORF">O31567</name>
    <name type="ORF">YOR3269W</name>
</gene>
<protein>
    <recommendedName>
        <fullName>Glycerol 2-dehydrogenase (NADP(+))</fullName>
        <ecNumber>1.1.1.156</ecNumber>
    </recommendedName>
    <alternativeName>
        <fullName>Galactose-inducible crystallin-like protein 1</fullName>
    </alternativeName>
</protein>
<proteinExistence type="evidence at protein level"/>
<dbReference type="EC" id="1.1.1.156"/>
<dbReference type="EMBL" id="X13228">
    <property type="protein sequence ID" value="CAA31615.1"/>
    <property type="molecule type" value="Genomic_DNA"/>
</dbReference>
<dbReference type="EMBL" id="X96740">
    <property type="protein sequence ID" value="CAA65512.1"/>
    <property type="molecule type" value="Genomic_DNA"/>
</dbReference>
<dbReference type="EMBL" id="X90518">
    <property type="protein sequence ID" value="CAA62107.1"/>
    <property type="molecule type" value="Genomic_DNA"/>
</dbReference>
<dbReference type="EMBL" id="X94335">
    <property type="protein sequence ID" value="CAA64040.1"/>
    <property type="molecule type" value="Genomic_DNA"/>
</dbReference>
<dbReference type="EMBL" id="Z75028">
    <property type="protein sequence ID" value="CAA99318.1"/>
    <property type="molecule type" value="Genomic_DNA"/>
</dbReference>
<dbReference type="EMBL" id="BK006948">
    <property type="protein sequence ID" value="DAA10895.1"/>
    <property type="molecule type" value="Genomic_DNA"/>
</dbReference>
<dbReference type="PIR" id="S22846">
    <property type="entry name" value="S22846"/>
</dbReference>
<dbReference type="RefSeq" id="NP_014763.1">
    <property type="nucleotide sequence ID" value="NM_001183539.1"/>
</dbReference>
<dbReference type="SMR" id="P14065"/>
<dbReference type="BioGRID" id="34516">
    <property type="interactions" value="59"/>
</dbReference>
<dbReference type="DIP" id="DIP-6342N"/>
<dbReference type="FunCoup" id="P14065">
    <property type="interactions" value="587"/>
</dbReference>
<dbReference type="IntAct" id="P14065">
    <property type="interactions" value="4"/>
</dbReference>
<dbReference type="MINT" id="P14065"/>
<dbReference type="STRING" id="4932.YOR120W"/>
<dbReference type="iPTMnet" id="P14065"/>
<dbReference type="PaxDb" id="4932-YOR120W"/>
<dbReference type="PeptideAtlas" id="P14065"/>
<dbReference type="TopDownProteomics" id="P14065"/>
<dbReference type="EnsemblFungi" id="YOR120W_mRNA">
    <property type="protein sequence ID" value="YOR120W"/>
    <property type="gene ID" value="YOR120W"/>
</dbReference>
<dbReference type="GeneID" id="854287"/>
<dbReference type="KEGG" id="sce:YOR120W"/>
<dbReference type="AGR" id="SGD:S000005646"/>
<dbReference type="SGD" id="S000005646">
    <property type="gene designation" value="GCY1"/>
</dbReference>
<dbReference type="VEuPathDB" id="FungiDB:YOR120W"/>
<dbReference type="eggNOG" id="KOG1577">
    <property type="taxonomic scope" value="Eukaryota"/>
</dbReference>
<dbReference type="GeneTree" id="ENSGT00940000176580"/>
<dbReference type="HOGENOM" id="CLU_023205_0_0_1"/>
<dbReference type="InParanoid" id="P14065"/>
<dbReference type="OMA" id="HVVISWH"/>
<dbReference type="OrthoDB" id="416253at2759"/>
<dbReference type="BioCyc" id="YEAST:YOR120W-MONOMER"/>
<dbReference type="BioGRID-ORCS" id="854287">
    <property type="hits" value="5 hits in 10 CRISPR screens"/>
</dbReference>
<dbReference type="PRO" id="PR:P14065"/>
<dbReference type="Proteomes" id="UP000002311">
    <property type="component" value="Chromosome XV"/>
</dbReference>
<dbReference type="RNAct" id="P14065">
    <property type="molecule type" value="protein"/>
</dbReference>
<dbReference type="GO" id="GO:0005737">
    <property type="term" value="C:cytoplasm"/>
    <property type="evidence" value="ECO:0007005"/>
    <property type="project" value="SGD"/>
</dbReference>
<dbReference type="GO" id="GO:0005829">
    <property type="term" value="C:cytosol"/>
    <property type="evidence" value="ECO:0000318"/>
    <property type="project" value="GO_Central"/>
</dbReference>
<dbReference type="GO" id="GO:0005634">
    <property type="term" value="C:nucleus"/>
    <property type="evidence" value="ECO:0007005"/>
    <property type="project" value="SGD"/>
</dbReference>
<dbReference type="GO" id="GO:0004033">
    <property type="term" value="F:aldo-keto reductase (NADPH) activity"/>
    <property type="evidence" value="ECO:0000314"/>
    <property type="project" value="SGD"/>
</dbReference>
<dbReference type="GO" id="GO:0004032">
    <property type="term" value="F:aldose reductase (NADPH) activity"/>
    <property type="evidence" value="ECO:0000314"/>
    <property type="project" value="SGD"/>
</dbReference>
<dbReference type="GO" id="GO:0047953">
    <property type="term" value="F:glycerol 2-dehydrogenase (NADP+) activity"/>
    <property type="evidence" value="ECO:0007669"/>
    <property type="project" value="UniProtKB-EC"/>
</dbReference>
<dbReference type="GO" id="GO:1990042">
    <property type="term" value="F:glycerol dehydrogenase [NAD(P)+] activity"/>
    <property type="evidence" value="ECO:0000315"/>
    <property type="project" value="SGD"/>
</dbReference>
<dbReference type="GO" id="GO:0003729">
    <property type="term" value="F:mRNA binding"/>
    <property type="evidence" value="ECO:0000314"/>
    <property type="project" value="SGD"/>
</dbReference>
<dbReference type="GO" id="GO:0016491">
    <property type="term" value="F:oxidoreductase activity"/>
    <property type="evidence" value="ECO:0000314"/>
    <property type="project" value="SGD"/>
</dbReference>
<dbReference type="GO" id="GO:0019568">
    <property type="term" value="P:arabinose catabolic process"/>
    <property type="evidence" value="ECO:0000314"/>
    <property type="project" value="SGD"/>
</dbReference>
<dbReference type="GO" id="GO:0034599">
    <property type="term" value="P:cellular response to oxidative stress"/>
    <property type="evidence" value="ECO:0000316"/>
    <property type="project" value="SGD"/>
</dbReference>
<dbReference type="GO" id="GO:0042843">
    <property type="term" value="P:D-xylose catabolic process"/>
    <property type="evidence" value="ECO:0000314"/>
    <property type="project" value="SGD"/>
</dbReference>
<dbReference type="GO" id="GO:0061610">
    <property type="term" value="P:glycerol to glycerone phosphate metabolic process"/>
    <property type="evidence" value="ECO:0000315"/>
    <property type="project" value="SGD"/>
</dbReference>
<dbReference type="CDD" id="cd19117">
    <property type="entry name" value="AKR_AKR3A1-2"/>
    <property type="match status" value="1"/>
</dbReference>
<dbReference type="FunFam" id="3.20.20.100:FF:000018">
    <property type="entry name" value="Glycerol dehydrogenase Gcy1"/>
    <property type="match status" value="1"/>
</dbReference>
<dbReference type="Gene3D" id="3.20.20.100">
    <property type="entry name" value="NADP-dependent oxidoreductase domain"/>
    <property type="match status" value="1"/>
</dbReference>
<dbReference type="InterPro" id="IPR020471">
    <property type="entry name" value="AKR"/>
</dbReference>
<dbReference type="InterPro" id="IPR044489">
    <property type="entry name" value="AKR3A"/>
</dbReference>
<dbReference type="InterPro" id="IPR018170">
    <property type="entry name" value="Aldo/ket_reductase_CS"/>
</dbReference>
<dbReference type="InterPro" id="IPR023210">
    <property type="entry name" value="NADP_OxRdtase_dom"/>
</dbReference>
<dbReference type="InterPro" id="IPR036812">
    <property type="entry name" value="NADP_OxRdtase_dom_sf"/>
</dbReference>
<dbReference type="PANTHER" id="PTHR11732">
    <property type="entry name" value="ALDO/KETO REDUCTASE"/>
    <property type="match status" value="1"/>
</dbReference>
<dbReference type="Pfam" id="PF00248">
    <property type="entry name" value="Aldo_ket_red"/>
    <property type="match status" value="1"/>
</dbReference>
<dbReference type="PIRSF" id="PIRSF000097">
    <property type="entry name" value="AKR"/>
    <property type="match status" value="1"/>
</dbReference>
<dbReference type="PRINTS" id="PR00069">
    <property type="entry name" value="ALDKETRDTASE"/>
</dbReference>
<dbReference type="SUPFAM" id="SSF51430">
    <property type="entry name" value="NAD(P)-linked oxidoreductase"/>
    <property type="match status" value="1"/>
</dbReference>
<dbReference type="PROSITE" id="PS00798">
    <property type="entry name" value="ALDOKETO_REDUCTASE_1"/>
    <property type="match status" value="1"/>
</dbReference>
<dbReference type="PROSITE" id="PS00062">
    <property type="entry name" value="ALDOKETO_REDUCTASE_2"/>
    <property type="match status" value="1"/>
</dbReference>
<dbReference type="PROSITE" id="PS00063">
    <property type="entry name" value="ALDOKETO_REDUCTASE_3"/>
    <property type="match status" value="1"/>
</dbReference>
<accession>P14065</accession>
<accession>D6W2H9</accession>
<sequence length="312" mass="35079">MPATLHDSTKILSLNTGAQIPQIGLGTWQSKENDAYKAVLTALKDGYRHIDTAAIYRNEDQVGQAIKDSGVPREEIFVTTKLWCTQHHEPEVALDQSLKRLGLDYVDLYLMHWPARLDPAYIKNEDILSVPTKKDGSRAVDITNWNFIKTWELMQELPKTGKTKAVGVSNFSINNLKDLLASQGNKLTPAANQVEIHPLLPQDELINFCKSKGIVVEAYSPLGSTDAPLLKEPVILEIAKKNNVQPGHVVISWHVQRGYVVLPKSVNPDRIKTNRKIFTLSTEDFEAINNISKEKGEKRVVHPNWSPFEVFK</sequence>
<name>GCY1_YEAST</name>